<feature type="chain" id="PRO_1000017967" description="Aspartate--ammonia ligase">
    <location>
        <begin position="1"/>
        <end position="330"/>
    </location>
</feature>
<organism>
    <name type="scientific">Streptococcus pyogenes serotype M2 (strain MGAS10270)</name>
    <dbReference type="NCBI Taxonomy" id="370552"/>
    <lineage>
        <taxon>Bacteria</taxon>
        <taxon>Bacillati</taxon>
        <taxon>Bacillota</taxon>
        <taxon>Bacilli</taxon>
        <taxon>Lactobacillales</taxon>
        <taxon>Streptococcaceae</taxon>
        <taxon>Streptococcus</taxon>
    </lineage>
</organism>
<proteinExistence type="inferred from homology"/>
<accession>Q1JFZ5</accession>
<sequence length="330" mass="37369">MKKSFIHQQEEISFVKNTFTQYLIAKLDVVEVQGPILSRVGDGMQDNLSGTENPVSVNVLKIPNATFEVVHSLAKWKRHTLARFGFNEGEGLVVNMKALRPDEDSLDQTHSVYVDQWDWEKVIPDGKRNLAYLKETVETIYKVIRLTELAVEARYDIEAVLPKKITFIHTEELVAKYPDLTPKERENAITKVFGAVFLIGIGGVLPDGKPHDGRAPDYDDWTTETENGYHGLNGDILVWNDQLGSAFELSSMGIRVDEEALKRQVEMTGDQDRLAFDWHKSLLNGLFPLTIGGGIGQSRMVMFLLRKQHIGEVQTSVWPQEVRDSYDNIL</sequence>
<reference key="1">
    <citation type="journal article" date="2006" name="Proc. Natl. Acad. Sci. U.S.A.">
        <title>Molecular genetic anatomy of inter- and intraserotype variation in the human bacterial pathogen group A Streptococcus.</title>
        <authorList>
            <person name="Beres S.B."/>
            <person name="Richter E.W."/>
            <person name="Nagiec M.J."/>
            <person name="Sumby P."/>
            <person name="Porcella S.F."/>
            <person name="DeLeo F.R."/>
            <person name="Musser J.M."/>
        </authorList>
    </citation>
    <scope>NUCLEOTIDE SEQUENCE [LARGE SCALE GENOMIC DNA]</scope>
    <source>
        <strain>MGAS10270</strain>
    </source>
</reference>
<keyword id="KW-0028">Amino-acid biosynthesis</keyword>
<keyword id="KW-0061">Asparagine biosynthesis</keyword>
<keyword id="KW-0067">ATP-binding</keyword>
<keyword id="KW-0963">Cytoplasm</keyword>
<keyword id="KW-0436">Ligase</keyword>
<keyword id="KW-0547">Nucleotide-binding</keyword>
<protein>
    <recommendedName>
        <fullName evidence="1">Aspartate--ammonia ligase</fullName>
        <ecNumber evidence="1">6.3.1.1</ecNumber>
    </recommendedName>
    <alternativeName>
        <fullName evidence="1">Asparagine synthetase A</fullName>
    </alternativeName>
</protein>
<dbReference type="EC" id="6.3.1.1" evidence="1"/>
<dbReference type="EMBL" id="CP000260">
    <property type="protein sequence ID" value="ABF34349.1"/>
    <property type="molecule type" value="Genomic_DNA"/>
</dbReference>
<dbReference type="SMR" id="Q1JFZ5"/>
<dbReference type="KEGG" id="sph:MGAS10270_Spy1284"/>
<dbReference type="HOGENOM" id="CLU_071543_0_0_9"/>
<dbReference type="UniPathway" id="UPA00134">
    <property type="reaction ID" value="UER00194"/>
</dbReference>
<dbReference type="Proteomes" id="UP000002436">
    <property type="component" value="Chromosome"/>
</dbReference>
<dbReference type="GO" id="GO:0005829">
    <property type="term" value="C:cytosol"/>
    <property type="evidence" value="ECO:0007669"/>
    <property type="project" value="TreeGrafter"/>
</dbReference>
<dbReference type="GO" id="GO:0004071">
    <property type="term" value="F:aspartate-ammonia ligase activity"/>
    <property type="evidence" value="ECO:0007669"/>
    <property type="project" value="UniProtKB-UniRule"/>
</dbReference>
<dbReference type="GO" id="GO:0005524">
    <property type="term" value="F:ATP binding"/>
    <property type="evidence" value="ECO:0007669"/>
    <property type="project" value="UniProtKB-UniRule"/>
</dbReference>
<dbReference type="GO" id="GO:0140096">
    <property type="term" value="F:catalytic activity, acting on a protein"/>
    <property type="evidence" value="ECO:0007669"/>
    <property type="project" value="UniProtKB-ARBA"/>
</dbReference>
<dbReference type="GO" id="GO:0016740">
    <property type="term" value="F:transferase activity"/>
    <property type="evidence" value="ECO:0007669"/>
    <property type="project" value="UniProtKB-ARBA"/>
</dbReference>
<dbReference type="GO" id="GO:0070981">
    <property type="term" value="P:L-asparagine biosynthetic process"/>
    <property type="evidence" value="ECO:0007669"/>
    <property type="project" value="UniProtKB-UniRule"/>
</dbReference>
<dbReference type="CDD" id="cd00645">
    <property type="entry name" value="AsnA"/>
    <property type="match status" value="1"/>
</dbReference>
<dbReference type="Gene3D" id="3.30.930.10">
    <property type="entry name" value="Bira Bifunctional Protein, Domain 2"/>
    <property type="match status" value="1"/>
</dbReference>
<dbReference type="HAMAP" id="MF_00555">
    <property type="entry name" value="AsnA"/>
    <property type="match status" value="1"/>
</dbReference>
<dbReference type="InterPro" id="IPR006195">
    <property type="entry name" value="aa-tRNA-synth_II"/>
</dbReference>
<dbReference type="InterPro" id="IPR045864">
    <property type="entry name" value="aa-tRNA-synth_II/BPL/LPL"/>
</dbReference>
<dbReference type="InterPro" id="IPR004618">
    <property type="entry name" value="AsnA"/>
</dbReference>
<dbReference type="NCBIfam" id="TIGR00669">
    <property type="entry name" value="asnA"/>
    <property type="match status" value="1"/>
</dbReference>
<dbReference type="PANTHER" id="PTHR30073">
    <property type="entry name" value="ASPARTATE--AMMONIA LIGASE"/>
    <property type="match status" value="1"/>
</dbReference>
<dbReference type="PANTHER" id="PTHR30073:SF5">
    <property type="entry name" value="ASPARTATE--AMMONIA LIGASE"/>
    <property type="match status" value="1"/>
</dbReference>
<dbReference type="Pfam" id="PF03590">
    <property type="entry name" value="AsnA"/>
    <property type="match status" value="1"/>
</dbReference>
<dbReference type="PIRSF" id="PIRSF001555">
    <property type="entry name" value="Asp_ammon_ligase"/>
    <property type="match status" value="1"/>
</dbReference>
<dbReference type="SUPFAM" id="SSF55681">
    <property type="entry name" value="Class II aaRS and biotin synthetases"/>
    <property type="match status" value="1"/>
</dbReference>
<dbReference type="PROSITE" id="PS50862">
    <property type="entry name" value="AA_TRNA_LIGASE_II"/>
    <property type="match status" value="1"/>
</dbReference>
<comment type="catalytic activity">
    <reaction evidence="1">
        <text>L-aspartate + NH4(+) + ATP = L-asparagine + AMP + diphosphate + H(+)</text>
        <dbReference type="Rhea" id="RHEA:11372"/>
        <dbReference type="ChEBI" id="CHEBI:15378"/>
        <dbReference type="ChEBI" id="CHEBI:28938"/>
        <dbReference type="ChEBI" id="CHEBI:29991"/>
        <dbReference type="ChEBI" id="CHEBI:30616"/>
        <dbReference type="ChEBI" id="CHEBI:33019"/>
        <dbReference type="ChEBI" id="CHEBI:58048"/>
        <dbReference type="ChEBI" id="CHEBI:456215"/>
        <dbReference type="EC" id="6.3.1.1"/>
    </reaction>
</comment>
<comment type="pathway">
    <text evidence="1">Amino-acid biosynthesis; L-asparagine biosynthesis; L-asparagine from L-aspartate (ammonia route): step 1/1.</text>
</comment>
<comment type="subcellular location">
    <subcellularLocation>
        <location evidence="1">Cytoplasm</location>
    </subcellularLocation>
</comment>
<comment type="similarity">
    <text evidence="1">Belongs to the class-II aminoacyl-tRNA synthetase family. AsnA subfamily.</text>
</comment>
<name>ASNA_STRPD</name>
<evidence type="ECO:0000255" key="1">
    <source>
        <dbReference type="HAMAP-Rule" id="MF_00555"/>
    </source>
</evidence>
<gene>
    <name evidence="1" type="primary">asnA</name>
    <name type="ordered locus">MGAS10270_Spy1284</name>
</gene>